<proteinExistence type="inferred from homology"/>
<sequence>MMENNRNYFVAIALSVLILIAWQFFYVSPKMEKDRIAAEKAQQAQSQPGTQQAAPGQAAPGQALPGGAIPSAAESRDQAIGKSARVAIDTPALSGSINLTGARFDDLKLKGYRETVDPKSPVITLFSPAETADGYFTEIGYIGSDATGSVPGPQTVWMLSGGDKLTPSTPVTLSYTNDKGITFTRTISVDDRYMFEVVDSIKNDAAAAVSLSSYGRVTRFNKPSTPSIYVLHEGFVGVAGEHGLQEVGYSDVEDEEPVEPGKSTGGWLGITDKYWAATIVPPQDTPFDIRFSHFADGRPRYQSDYKSDAVTVAPGQSAEVKNLIFAGAKEVPVVDNYELTYSIPNFDKLIDWGWFYFITKPMFKMMDFFFRLFGNFGIAILITTIVVKLIFFPLANKQYASMANMKKVQPKMEELKKKFGDDRMGLQQAMMQLYKEEKINPLAGCWPILIQIPVFFALYKVIYVTIEMRHAPFFGWIQDLSAPDPTTIINLFGLLPFEGPAFLHLGIWPIVMGVTMFLQMRMNPTPPDPTQAMLFTWMPVVFTFMLASFPAGLVIYWAWNNTLSILQQGIIMKRQGVKVELFDNLKSLFSKKPKPAE</sequence>
<dbReference type="EMBL" id="CP000738">
    <property type="protein sequence ID" value="ABR58939.1"/>
    <property type="molecule type" value="Genomic_DNA"/>
</dbReference>
<dbReference type="RefSeq" id="YP_001325774.1">
    <property type="nucleotide sequence ID" value="NC_009636.1"/>
</dbReference>
<dbReference type="SMR" id="A6U5K9"/>
<dbReference type="STRING" id="366394.Smed_0079"/>
<dbReference type="KEGG" id="smd:Smed_0079"/>
<dbReference type="PATRIC" id="fig|366394.8.peg.3135"/>
<dbReference type="eggNOG" id="COG0706">
    <property type="taxonomic scope" value="Bacteria"/>
</dbReference>
<dbReference type="HOGENOM" id="CLU_016535_1_0_5"/>
<dbReference type="OrthoDB" id="9780552at2"/>
<dbReference type="Proteomes" id="UP000001108">
    <property type="component" value="Chromosome"/>
</dbReference>
<dbReference type="GO" id="GO:0005886">
    <property type="term" value="C:plasma membrane"/>
    <property type="evidence" value="ECO:0007669"/>
    <property type="project" value="UniProtKB-SubCell"/>
</dbReference>
<dbReference type="GO" id="GO:0032977">
    <property type="term" value="F:membrane insertase activity"/>
    <property type="evidence" value="ECO:0007669"/>
    <property type="project" value="InterPro"/>
</dbReference>
<dbReference type="GO" id="GO:0051205">
    <property type="term" value="P:protein insertion into membrane"/>
    <property type="evidence" value="ECO:0007669"/>
    <property type="project" value="TreeGrafter"/>
</dbReference>
<dbReference type="GO" id="GO:0015031">
    <property type="term" value="P:protein transport"/>
    <property type="evidence" value="ECO:0007669"/>
    <property type="project" value="UniProtKB-KW"/>
</dbReference>
<dbReference type="CDD" id="cd20070">
    <property type="entry name" value="5TM_YidC_Alb3"/>
    <property type="match status" value="1"/>
</dbReference>
<dbReference type="CDD" id="cd19961">
    <property type="entry name" value="EcYidC-like_peri"/>
    <property type="match status" value="1"/>
</dbReference>
<dbReference type="Gene3D" id="2.70.98.90">
    <property type="match status" value="1"/>
</dbReference>
<dbReference type="HAMAP" id="MF_01810">
    <property type="entry name" value="YidC_type1"/>
    <property type="match status" value="1"/>
</dbReference>
<dbReference type="InterPro" id="IPR019998">
    <property type="entry name" value="Membr_insert_YidC"/>
</dbReference>
<dbReference type="InterPro" id="IPR028053">
    <property type="entry name" value="Membr_insert_YidC_N"/>
</dbReference>
<dbReference type="InterPro" id="IPR001708">
    <property type="entry name" value="YidC/ALB3/OXA1/COX18"/>
</dbReference>
<dbReference type="InterPro" id="IPR028055">
    <property type="entry name" value="YidC/Oxa/ALB_C"/>
</dbReference>
<dbReference type="InterPro" id="IPR047196">
    <property type="entry name" value="YidC_ALB_C"/>
</dbReference>
<dbReference type="InterPro" id="IPR038221">
    <property type="entry name" value="YidC_periplasmic_sf"/>
</dbReference>
<dbReference type="NCBIfam" id="NF002353">
    <property type="entry name" value="PRK01318.1-4"/>
    <property type="match status" value="1"/>
</dbReference>
<dbReference type="NCBIfam" id="TIGR03593">
    <property type="entry name" value="yidC_nterm"/>
    <property type="match status" value="1"/>
</dbReference>
<dbReference type="NCBIfam" id="TIGR03592">
    <property type="entry name" value="yidC_oxa1_cterm"/>
    <property type="match status" value="1"/>
</dbReference>
<dbReference type="PANTHER" id="PTHR12428:SF65">
    <property type="entry name" value="CYTOCHROME C OXIDASE ASSEMBLY PROTEIN COX18, MITOCHONDRIAL"/>
    <property type="match status" value="1"/>
</dbReference>
<dbReference type="PANTHER" id="PTHR12428">
    <property type="entry name" value="OXA1"/>
    <property type="match status" value="1"/>
</dbReference>
<dbReference type="Pfam" id="PF02096">
    <property type="entry name" value="60KD_IMP"/>
    <property type="match status" value="1"/>
</dbReference>
<dbReference type="Pfam" id="PF14849">
    <property type="entry name" value="YidC_periplas"/>
    <property type="match status" value="1"/>
</dbReference>
<dbReference type="PRINTS" id="PR00701">
    <property type="entry name" value="60KDINNERMP"/>
</dbReference>
<dbReference type="PRINTS" id="PR01900">
    <property type="entry name" value="YIDCPROTEIN"/>
</dbReference>
<protein>
    <recommendedName>
        <fullName evidence="1">Membrane protein insertase YidC</fullName>
    </recommendedName>
    <alternativeName>
        <fullName evidence="1">Foldase YidC</fullName>
    </alternativeName>
    <alternativeName>
        <fullName evidence="1">Membrane integrase YidC</fullName>
    </alternativeName>
    <alternativeName>
        <fullName evidence="1">Membrane protein YidC</fullName>
    </alternativeName>
</protein>
<organism>
    <name type="scientific">Sinorhizobium medicae (strain WSM419)</name>
    <name type="common">Ensifer medicae</name>
    <dbReference type="NCBI Taxonomy" id="366394"/>
    <lineage>
        <taxon>Bacteria</taxon>
        <taxon>Pseudomonadati</taxon>
        <taxon>Pseudomonadota</taxon>
        <taxon>Alphaproteobacteria</taxon>
        <taxon>Hyphomicrobiales</taxon>
        <taxon>Rhizobiaceae</taxon>
        <taxon>Sinorhizobium/Ensifer group</taxon>
        <taxon>Sinorhizobium</taxon>
    </lineage>
</organism>
<gene>
    <name evidence="1" type="primary">yidC</name>
    <name type="ordered locus">Smed_0079</name>
</gene>
<reference key="1">
    <citation type="submission" date="2007-06" db="EMBL/GenBank/DDBJ databases">
        <title>Complete sequence of Sinorhizobium medicae WSM419 chromosome.</title>
        <authorList>
            <consortium name="US DOE Joint Genome Institute"/>
            <person name="Copeland A."/>
            <person name="Lucas S."/>
            <person name="Lapidus A."/>
            <person name="Barry K."/>
            <person name="Glavina del Rio T."/>
            <person name="Dalin E."/>
            <person name="Tice H."/>
            <person name="Pitluck S."/>
            <person name="Chain P."/>
            <person name="Malfatti S."/>
            <person name="Shin M."/>
            <person name="Vergez L."/>
            <person name="Schmutz J."/>
            <person name="Larimer F."/>
            <person name="Land M."/>
            <person name="Hauser L."/>
            <person name="Kyrpides N."/>
            <person name="Mikhailova N."/>
            <person name="Reeve W.G."/>
            <person name="Richardson P."/>
        </authorList>
    </citation>
    <scope>NUCLEOTIDE SEQUENCE [LARGE SCALE GENOMIC DNA]</scope>
    <source>
        <strain>WSM419</strain>
    </source>
</reference>
<evidence type="ECO:0000255" key="1">
    <source>
        <dbReference type="HAMAP-Rule" id="MF_01810"/>
    </source>
</evidence>
<evidence type="ECO:0000256" key="2">
    <source>
        <dbReference type="SAM" id="MobiDB-lite"/>
    </source>
</evidence>
<comment type="function">
    <text evidence="1">Required for the insertion and/or proper folding and/or complex formation of integral membrane proteins into the membrane. Involved in integration of membrane proteins that insert both dependently and independently of the Sec translocase complex, as well as at least some lipoproteins. Aids folding of multispanning membrane proteins.</text>
</comment>
<comment type="subunit">
    <text evidence="1">Interacts with the Sec translocase complex via SecD. Specifically interacts with transmembrane segments of nascent integral membrane proteins during membrane integration.</text>
</comment>
<comment type="subcellular location">
    <subcellularLocation>
        <location evidence="1">Cell inner membrane</location>
        <topology evidence="1">Multi-pass membrane protein</topology>
    </subcellularLocation>
</comment>
<comment type="similarity">
    <text evidence="1">Belongs to the OXA1/ALB3/YidC family. Type 1 subfamily.</text>
</comment>
<feature type="chain" id="PRO_1000070181" description="Membrane protein insertase YidC">
    <location>
        <begin position="1"/>
        <end position="597"/>
    </location>
</feature>
<feature type="transmembrane region" description="Helical" evidence="1">
    <location>
        <begin position="8"/>
        <end position="28"/>
    </location>
</feature>
<feature type="transmembrane region" description="Helical" evidence="1">
    <location>
        <begin position="372"/>
        <end position="392"/>
    </location>
</feature>
<feature type="transmembrane region" description="Helical" evidence="1">
    <location>
        <begin position="446"/>
        <end position="466"/>
    </location>
</feature>
<feature type="transmembrane region" description="Helical" evidence="1">
    <location>
        <begin position="491"/>
        <end position="511"/>
    </location>
</feature>
<feature type="transmembrane region" description="Helical" evidence="1">
    <location>
        <begin position="535"/>
        <end position="555"/>
    </location>
</feature>
<feature type="region of interest" description="Disordered" evidence="2">
    <location>
        <begin position="38"/>
        <end position="75"/>
    </location>
</feature>
<feature type="compositionally biased region" description="Low complexity" evidence="2">
    <location>
        <begin position="41"/>
        <end position="70"/>
    </location>
</feature>
<accession>A6U5K9</accession>
<name>YIDC_SINMW</name>
<keyword id="KW-0997">Cell inner membrane</keyword>
<keyword id="KW-1003">Cell membrane</keyword>
<keyword id="KW-0143">Chaperone</keyword>
<keyword id="KW-0472">Membrane</keyword>
<keyword id="KW-0653">Protein transport</keyword>
<keyword id="KW-0812">Transmembrane</keyword>
<keyword id="KW-1133">Transmembrane helix</keyword>
<keyword id="KW-0813">Transport</keyword>